<dbReference type="EMBL" id="D63644">
    <property type="protein sequence ID" value="BAA09799.1"/>
    <property type="molecule type" value="mRNA"/>
</dbReference>
<dbReference type="EMBL" id="AB093225">
    <property type="protein sequence ID" value="BAC41409.1"/>
    <property type="status" value="ALT_INIT"/>
    <property type="molecule type" value="mRNA"/>
</dbReference>
<dbReference type="EMBL" id="BC054546">
    <property type="protein sequence ID" value="AAH54546.1"/>
    <property type="molecule type" value="mRNA"/>
</dbReference>
<dbReference type="CCDS" id="CCDS59733.1">
    <molecule id="Q61324-1"/>
</dbReference>
<dbReference type="RefSeq" id="NP_001398850.1">
    <molecule id="Q61324-2"/>
    <property type="nucleotide sequence ID" value="NM_001411921.1"/>
</dbReference>
<dbReference type="RefSeq" id="NP_001398851.1">
    <molecule id="Q61324-2"/>
    <property type="nucleotide sequence ID" value="NM_001411922.1"/>
</dbReference>
<dbReference type="RefSeq" id="NP_001398852.1">
    <molecule id="Q61324-2"/>
    <property type="nucleotide sequence ID" value="NM_001411923.1"/>
</dbReference>
<dbReference type="RefSeq" id="NP_031514.3">
    <molecule id="Q61324-1"/>
    <property type="nucleotide sequence ID" value="NM_007488.3"/>
</dbReference>
<dbReference type="RefSeq" id="XP_006507303.1">
    <property type="nucleotide sequence ID" value="XM_006507240.2"/>
</dbReference>
<dbReference type="RefSeq" id="XP_006507305.1">
    <property type="nucleotide sequence ID" value="XM_006507242.2"/>
</dbReference>
<dbReference type="RefSeq" id="XP_011239957.1">
    <property type="nucleotide sequence ID" value="XM_011241655.2"/>
</dbReference>
<dbReference type="RefSeq" id="XP_030097877.1">
    <molecule id="Q61324-2"/>
    <property type="nucleotide sequence ID" value="XM_030242017.2"/>
</dbReference>
<dbReference type="RefSeq" id="XP_036008493.1">
    <molecule id="Q61324-2"/>
    <property type="nucleotide sequence ID" value="XM_036152600.1"/>
</dbReference>
<dbReference type="RefSeq" id="XP_036008494.1">
    <molecule id="Q61324-2"/>
    <property type="nucleotide sequence ID" value="XM_036152601.1"/>
</dbReference>
<dbReference type="RefSeq" id="XP_036008495.1">
    <molecule id="Q61324-2"/>
    <property type="nucleotide sequence ID" value="XM_036152602.1"/>
</dbReference>
<dbReference type="RefSeq" id="XP_036008496.1">
    <molecule id="Q61324-2"/>
    <property type="nucleotide sequence ID" value="XM_036152603.1"/>
</dbReference>
<dbReference type="PDB" id="7XI3">
    <property type="method" value="X-ray"/>
    <property type="resolution" value="4.27 A"/>
    <property type="chains" value="A=50-439"/>
</dbReference>
<dbReference type="PDBsum" id="7XI3"/>
<dbReference type="SMR" id="Q61324"/>
<dbReference type="BioGRID" id="198206">
    <property type="interactions" value="25"/>
</dbReference>
<dbReference type="FunCoup" id="Q61324">
    <property type="interactions" value="1083"/>
</dbReference>
<dbReference type="IntAct" id="Q61324">
    <property type="interactions" value="2"/>
</dbReference>
<dbReference type="STRING" id="10090.ENSMUSP00000082154"/>
<dbReference type="GlyGen" id="Q61324">
    <property type="glycosylation" value="1 site, 1 N-linked glycan (1 site)"/>
</dbReference>
<dbReference type="iPTMnet" id="Q61324"/>
<dbReference type="PhosphoSitePlus" id="Q61324"/>
<dbReference type="jPOST" id="Q61324"/>
<dbReference type="PaxDb" id="10090-ENSMUSP00000082154"/>
<dbReference type="PeptideAtlas" id="Q61324"/>
<dbReference type="ProteomicsDB" id="283273">
    <molecule id="Q61324-1"/>
</dbReference>
<dbReference type="ProteomicsDB" id="283274">
    <molecule id="Q61324-2"/>
</dbReference>
<dbReference type="Pumba" id="Q61324"/>
<dbReference type="Antibodypedia" id="3911">
    <property type="antibodies" value="291 antibodies from 32 providers"/>
</dbReference>
<dbReference type="DNASU" id="11864"/>
<dbReference type="Ensembl" id="ENSMUST00000085077.5">
    <molecule id="Q61324-1"/>
    <property type="protein sequence ID" value="ENSMUSP00000082154.4"/>
    <property type="gene ID" value="ENSMUSG00000015709.10"/>
</dbReference>
<dbReference type="Ensembl" id="ENSMUST00000208232.2">
    <molecule id="Q61324-2"/>
    <property type="protein sequence ID" value="ENSMUSP00000146413.2"/>
    <property type="gene ID" value="ENSMUSG00000015709.10"/>
</dbReference>
<dbReference type="Ensembl" id="ENSMUST00000209133.2">
    <molecule id="Q61324-2"/>
    <property type="protein sequence ID" value="ENSMUSP00000147129.2"/>
    <property type="gene ID" value="ENSMUSG00000015709.10"/>
</dbReference>
<dbReference type="GeneID" id="11864"/>
<dbReference type="KEGG" id="mmu:11864"/>
<dbReference type="UCSC" id="uc009ief.2">
    <molecule id="Q61324-1"/>
    <property type="organism name" value="mouse"/>
</dbReference>
<dbReference type="AGR" id="MGI:107188"/>
<dbReference type="CTD" id="9915"/>
<dbReference type="MGI" id="MGI:107188">
    <property type="gene designation" value="Arnt2"/>
</dbReference>
<dbReference type="VEuPathDB" id="HostDB:ENSMUSG00000015709"/>
<dbReference type="eggNOG" id="KOG3561">
    <property type="taxonomic scope" value="Eukaryota"/>
</dbReference>
<dbReference type="GeneTree" id="ENSGT00940000158198"/>
<dbReference type="HOGENOM" id="CLU_011864_1_1_1"/>
<dbReference type="InParanoid" id="Q61324"/>
<dbReference type="OMA" id="RVRKDCY"/>
<dbReference type="OrthoDB" id="71302at2759"/>
<dbReference type="PhylomeDB" id="Q61324"/>
<dbReference type="TreeFam" id="TF319983"/>
<dbReference type="Reactome" id="R-MMU-211945">
    <property type="pathway name" value="Phase I - Functionalization of compounds"/>
</dbReference>
<dbReference type="Reactome" id="R-MMU-211976">
    <property type="pathway name" value="Endogenous sterols"/>
</dbReference>
<dbReference type="Reactome" id="R-MMU-211981">
    <property type="pathway name" value="Xenobiotics"/>
</dbReference>
<dbReference type="Reactome" id="R-MMU-8937144">
    <property type="pathway name" value="Aryl hydrocarbon receptor signalling"/>
</dbReference>
<dbReference type="Reactome" id="R-MMU-9768919">
    <property type="pathway name" value="NPAS4 regulates expression of target genes"/>
</dbReference>
<dbReference type="BioGRID-ORCS" id="11864">
    <property type="hits" value="2 hits in 76 CRISPR screens"/>
</dbReference>
<dbReference type="ChiTaRS" id="Arnt2">
    <property type="organism name" value="mouse"/>
</dbReference>
<dbReference type="PRO" id="PR:Q61324"/>
<dbReference type="Proteomes" id="UP000000589">
    <property type="component" value="Chromosome 7"/>
</dbReference>
<dbReference type="RNAct" id="Q61324">
    <property type="molecule type" value="protein"/>
</dbReference>
<dbReference type="Bgee" id="ENSMUSG00000015709">
    <property type="expression patterns" value="Expressed in retrosplenial region and 228 other cell types or tissues"/>
</dbReference>
<dbReference type="ExpressionAtlas" id="Q61324">
    <property type="expression patterns" value="baseline and differential"/>
</dbReference>
<dbReference type="GO" id="GO:0005737">
    <property type="term" value="C:cytoplasm"/>
    <property type="evidence" value="ECO:0007669"/>
    <property type="project" value="InterPro"/>
</dbReference>
<dbReference type="GO" id="GO:0005654">
    <property type="term" value="C:nucleoplasm"/>
    <property type="evidence" value="ECO:0000304"/>
    <property type="project" value="Reactome"/>
</dbReference>
<dbReference type="GO" id="GO:0005634">
    <property type="term" value="C:nucleus"/>
    <property type="evidence" value="ECO:0000250"/>
    <property type="project" value="UniProtKB"/>
</dbReference>
<dbReference type="GO" id="GO:0005667">
    <property type="term" value="C:transcription regulator complex"/>
    <property type="evidence" value="ECO:0000314"/>
    <property type="project" value="MGI"/>
</dbReference>
<dbReference type="GO" id="GO:0017162">
    <property type="term" value="F:aryl hydrocarbon receptor binding"/>
    <property type="evidence" value="ECO:0000353"/>
    <property type="project" value="UniProtKB"/>
</dbReference>
<dbReference type="GO" id="GO:0001228">
    <property type="term" value="F:DNA-binding transcription activator activity, RNA polymerase II-specific"/>
    <property type="evidence" value="ECO:0000314"/>
    <property type="project" value="NTNU_SB"/>
</dbReference>
<dbReference type="GO" id="GO:0003700">
    <property type="term" value="F:DNA-binding transcription factor activity"/>
    <property type="evidence" value="ECO:0000314"/>
    <property type="project" value="UniProtKB"/>
</dbReference>
<dbReference type="GO" id="GO:0046982">
    <property type="term" value="F:protein heterodimerization activity"/>
    <property type="evidence" value="ECO:0000314"/>
    <property type="project" value="UniProtKB"/>
</dbReference>
<dbReference type="GO" id="GO:0044877">
    <property type="term" value="F:protein-containing complex binding"/>
    <property type="evidence" value="ECO:0007669"/>
    <property type="project" value="Ensembl"/>
</dbReference>
<dbReference type="GO" id="GO:0000978">
    <property type="term" value="F:RNA polymerase II cis-regulatory region sequence-specific DNA binding"/>
    <property type="evidence" value="ECO:0000314"/>
    <property type="project" value="NTNU_SB"/>
</dbReference>
<dbReference type="GO" id="GO:0007420">
    <property type="term" value="P:brain development"/>
    <property type="evidence" value="ECO:0000250"/>
    <property type="project" value="UniProtKB"/>
</dbReference>
<dbReference type="GO" id="GO:0007417">
    <property type="term" value="P:central nervous system development"/>
    <property type="evidence" value="ECO:0000315"/>
    <property type="project" value="UniProtKB"/>
</dbReference>
<dbReference type="GO" id="GO:0001701">
    <property type="term" value="P:in utero embryonic development"/>
    <property type="evidence" value="ECO:0000270"/>
    <property type="project" value="UniProtKB"/>
</dbReference>
<dbReference type="GO" id="GO:0043066">
    <property type="term" value="P:negative regulation of apoptotic process"/>
    <property type="evidence" value="ECO:0007669"/>
    <property type="project" value="Ensembl"/>
</dbReference>
<dbReference type="GO" id="GO:0008284">
    <property type="term" value="P:positive regulation of cell population proliferation"/>
    <property type="evidence" value="ECO:0007669"/>
    <property type="project" value="Ensembl"/>
</dbReference>
<dbReference type="GO" id="GO:0045893">
    <property type="term" value="P:positive regulation of DNA-templated transcription"/>
    <property type="evidence" value="ECO:0000314"/>
    <property type="project" value="UniProtKB"/>
</dbReference>
<dbReference type="GO" id="GO:0045944">
    <property type="term" value="P:positive regulation of transcription by RNA polymerase II"/>
    <property type="evidence" value="ECO:0000314"/>
    <property type="project" value="NTNU_SB"/>
</dbReference>
<dbReference type="GO" id="GO:0006355">
    <property type="term" value="P:regulation of DNA-templated transcription"/>
    <property type="evidence" value="ECO:0000266"/>
    <property type="project" value="MGI"/>
</dbReference>
<dbReference type="GO" id="GO:0032355">
    <property type="term" value="P:response to estradiol"/>
    <property type="evidence" value="ECO:0007669"/>
    <property type="project" value="Ensembl"/>
</dbReference>
<dbReference type="GO" id="GO:0001666">
    <property type="term" value="P:response to hypoxia"/>
    <property type="evidence" value="ECO:0000304"/>
    <property type="project" value="UniProtKB"/>
</dbReference>
<dbReference type="GO" id="GO:0009636">
    <property type="term" value="P:response to toxic substance"/>
    <property type="evidence" value="ECO:0000304"/>
    <property type="project" value="UniProtKB"/>
</dbReference>
<dbReference type="GO" id="GO:0009410">
    <property type="term" value="P:response to xenobiotic stimulus"/>
    <property type="evidence" value="ECO:0000304"/>
    <property type="project" value="UniProtKB"/>
</dbReference>
<dbReference type="GO" id="GO:0007165">
    <property type="term" value="P:signal transduction"/>
    <property type="evidence" value="ECO:0000303"/>
    <property type="project" value="UniProtKB"/>
</dbReference>
<dbReference type="CDD" id="cd18947">
    <property type="entry name" value="bHLH-PAS_ARNT"/>
    <property type="match status" value="1"/>
</dbReference>
<dbReference type="CDD" id="cd00130">
    <property type="entry name" value="PAS"/>
    <property type="match status" value="2"/>
</dbReference>
<dbReference type="FunFam" id="3.30.450.20:FF:000003">
    <property type="entry name" value="Aryl hydrocarbon receptor nuclear translocator 2"/>
    <property type="match status" value="1"/>
</dbReference>
<dbReference type="FunFam" id="3.30.450.20:FF:000020">
    <property type="entry name" value="Aryl hydrocarbon receptor nuclear translocator 2"/>
    <property type="match status" value="1"/>
</dbReference>
<dbReference type="FunFam" id="4.10.280.10:FF:000011">
    <property type="entry name" value="Aryl hydrocarbon receptor nuclear translocator 2"/>
    <property type="match status" value="1"/>
</dbReference>
<dbReference type="Gene3D" id="4.10.280.10">
    <property type="entry name" value="Helix-loop-helix DNA-binding domain"/>
    <property type="match status" value="1"/>
</dbReference>
<dbReference type="Gene3D" id="3.30.450.20">
    <property type="entry name" value="PAS domain"/>
    <property type="match status" value="2"/>
</dbReference>
<dbReference type="InterPro" id="IPR011598">
    <property type="entry name" value="bHLH_dom"/>
</dbReference>
<dbReference type="InterPro" id="IPR050933">
    <property type="entry name" value="Circadian_TF"/>
</dbReference>
<dbReference type="InterPro" id="IPR036638">
    <property type="entry name" value="HLH_DNA-bd_sf"/>
</dbReference>
<dbReference type="InterPro" id="IPR001067">
    <property type="entry name" value="Nuc_translocat"/>
</dbReference>
<dbReference type="InterPro" id="IPR001610">
    <property type="entry name" value="PAC"/>
</dbReference>
<dbReference type="InterPro" id="IPR000014">
    <property type="entry name" value="PAS"/>
</dbReference>
<dbReference type="InterPro" id="IPR035965">
    <property type="entry name" value="PAS-like_dom_sf"/>
</dbReference>
<dbReference type="InterPro" id="IPR013767">
    <property type="entry name" value="PAS_fold"/>
</dbReference>
<dbReference type="NCBIfam" id="TIGR00229">
    <property type="entry name" value="sensory_box"/>
    <property type="match status" value="1"/>
</dbReference>
<dbReference type="PANTHER" id="PTHR23042">
    <property type="entry name" value="CIRCADIAN PROTEIN CLOCK/ARNT/BMAL/PAS"/>
    <property type="match status" value="1"/>
</dbReference>
<dbReference type="Pfam" id="PF00010">
    <property type="entry name" value="HLH"/>
    <property type="match status" value="1"/>
</dbReference>
<dbReference type="Pfam" id="PF00989">
    <property type="entry name" value="PAS"/>
    <property type="match status" value="1"/>
</dbReference>
<dbReference type="Pfam" id="PF14598">
    <property type="entry name" value="PAS_11"/>
    <property type="match status" value="1"/>
</dbReference>
<dbReference type="PRINTS" id="PR00785">
    <property type="entry name" value="NCTRNSLOCATR"/>
</dbReference>
<dbReference type="SMART" id="SM00353">
    <property type="entry name" value="HLH"/>
    <property type="match status" value="1"/>
</dbReference>
<dbReference type="SMART" id="SM00086">
    <property type="entry name" value="PAC"/>
    <property type="match status" value="1"/>
</dbReference>
<dbReference type="SMART" id="SM00091">
    <property type="entry name" value="PAS"/>
    <property type="match status" value="2"/>
</dbReference>
<dbReference type="SUPFAM" id="SSF47459">
    <property type="entry name" value="HLH, helix-loop-helix DNA-binding domain"/>
    <property type="match status" value="1"/>
</dbReference>
<dbReference type="SUPFAM" id="SSF55785">
    <property type="entry name" value="PYP-like sensor domain (PAS domain)"/>
    <property type="match status" value="2"/>
</dbReference>
<dbReference type="PROSITE" id="PS50888">
    <property type="entry name" value="BHLH"/>
    <property type="match status" value="1"/>
</dbReference>
<dbReference type="PROSITE" id="PS50112">
    <property type="entry name" value="PAS"/>
    <property type="match status" value="2"/>
</dbReference>
<sequence>MATPAAVNPPEMASDIPGSVALPVAPMAATGQVRMAGAMPARGGKRRSGMDFDDEDGEGPSKFSRENHSEIERRRRNKMTQYITELSDMVPTCSALARKPDKLTILRMAVSHMKSMRGTGNKSTDGAYKPSFLTEQELKHLILEAADGFLFVVAAETGRVIYVSDSVTPVLNQPQSEWFGSTLYEQVHPDDVEKLREQLCTSENSMTGRILDLKTGTVKKEGQQSSMRMCMGSRRSFICRMRCGNAPLDHLPLNRITTMRKRFRNGLGPVKEGEAQYAVVHCTGYIKAWPPAGMTIPEEDADVGQGSKYCLVAIGRLQVTSSPVCMDMSGMSVPTEFLSRHNSDGIITFVDPRCISVIGYQPQDLLGKDILEFCHPEDQSHLRESFQQVVKLKGQVLSVMYRFRTKNREWLLIRTSSFTFQNPYSDEIEYVICTNTNVKQLQQQQAELEVHQRDGLSSYDLSQVPVPNLPAGVHEAGKSVEKADAIFSQERDPRFAEMFAGISASEKKMMSSASASGSQQIYSQGSPFPAGHSGKAFSSSVVHVPGVNDIQSSSSTGQNISQISRQLNQGQVAWTGSRPPFPGQPSKTQSSAFGIGSSHPYPADPSSYSPLSSPAASSPSGNAYPSLANRTPGFAESGQSGGQFQGRPSEVWSQWQSQHHGQQSGEQHSHQQPGQTEVFQDMLPMPGDPTQGTGNYNIEDFADLGMFPPFSE</sequence>
<evidence type="ECO:0000250" key="1">
    <source>
        <dbReference type="UniProtKB" id="Q9HBZ2"/>
    </source>
</evidence>
<evidence type="ECO:0000255" key="2">
    <source>
        <dbReference type="PROSITE-ProRule" id="PRU00140"/>
    </source>
</evidence>
<evidence type="ECO:0000255" key="3">
    <source>
        <dbReference type="PROSITE-ProRule" id="PRU00981"/>
    </source>
</evidence>
<evidence type="ECO:0000256" key="4">
    <source>
        <dbReference type="SAM" id="MobiDB-lite"/>
    </source>
</evidence>
<evidence type="ECO:0000269" key="5">
    <source>
    </source>
</evidence>
<evidence type="ECO:0000269" key="6">
    <source>
    </source>
</evidence>
<evidence type="ECO:0000303" key="7">
    <source>
    </source>
</evidence>
<evidence type="ECO:0000305" key="8"/>
<evidence type="ECO:0007744" key="9">
    <source>
    </source>
</evidence>
<protein>
    <recommendedName>
        <fullName>Aryl hydrocarbon receptor nuclear translocator 2</fullName>
        <shortName>ARNT protein 2</shortName>
    </recommendedName>
</protein>
<proteinExistence type="evidence at protein level"/>
<comment type="function">
    <text evidence="1">Transcription factor that plays a role in the development of the hypothalamo-pituitary axis, postnatal brain growth, and visual and renal function. Specifically recognizes the xenobiotic response element (XRE).</text>
</comment>
<comment type="subunit">
    <text evidence="1 5 6">Efficient DNA binding requires dimerization with another bHLH protein (By similarity). Heterodimer with NPAS4 or SIM1 (PubMed:27782878). Heterodimer with the aryl hydrocarbon receptor (AHR) or the SIM1 protein (By similarity). Interacts with TACC3 (PubMed:11025203).</text>
</comment>
<comment type="subcellular location">
    <subcellularLocation>
        <location evidence="1 3">Nucleus</location>
    </subcellularLocation>
</comment>
<comment type="alternative products">
    <event type="alternative splicing"/>
    <isoform>
        <id>Q61324-1</id>
        <name>1</name>
        <sequence type="displayed"/>
    </isoform>
    <isoform>
        <id>Q61324-2</id>
        <name>2</name>
        <sequence type="described" ref="VSP_022689"/>
    </isoform>
</comment>
<comment type="tissue specificity">
    <text>Restricted to adult brain and kidney.</text>
</comment>
<comment type="sequence caution" evidence="8">
    <conflict type="erroneous initiation">
        <sequence resource="EMBL-CDS" id="BAC41409"/>
    </conflict>
</comment>
<organism>
    <name type="scientific">Mus musculus</name>
    <name type="common">Mouse</name>
    <dbReference type="NCBI Taxonomy" id="10090"/>
    <lineage>
        <taxon>Eukaryota</taxon>
        <taxon>Metazoa</taxon>
        <taxon>Chordata</taxon>
        <taxon>Craniata</taxon>
        <taxon>Vertebrata</taxon>
        <taxon>Euteleostomi</taxon>
        <taxon>Mammalia</taxon>
        <taxon>Eutheria</taxon>
        <taxon>Euarchontoglires</taxon>
        <taxon>Glires</taxon>
        <taxon>Rodentia</taxon>
        <taxon>Myomorpha</taxon>
        <taxon>Muroidea</taxon>
        <taxon>Muridae</taxon>
        <taxon>Murinae</taxon>
        <taxon>Mus</taxon>
        <taxon>Mus</taxon>
    </lineage>
</organism>
<feature type="chain" id="PRO_0000127123" description="Aryl hydrocarbon receptor nuclear translocator 2">
    <location>
        <begin position="1"/>
        <end position="712"/>
    </location>
</feature>
<feature type="domain" description="bHLH" evidence="3">
    <location>
        <begin position="63"/>
        <end position="116"/>
    </location>
</feature>
<feature type="domain" description="PAS 1" evidence="2">
    <location>
        <begin position="134"/>
        <end position="209"/>
    </location>
</feature>
<feature type="domain" description="PAS 2" evidence="2">
    <location>
        <begin position="323"/>
        <end position="393"/>
    </location>
</feature>
<feature type="domain" description="PAC">
    <location>
        <begin position="398"/>
        <end position="441"/>
    </location>
</feature>
<feature type="region of interest" description="Disordered" evidence="4">
    <location>
        <begin position="36"/>
        <end position="73"/>
    </location>
</feature>
<feature type="region of interest" description="Disordered" evidence="4">
    <location>
        <begin position="573"/>
        <end position="712"/>
    </location>
</feature>
<feature type="compositionally biased region" description="Basic and acidic residues" evidence="4">
    <location>
        <begin position="63"/>
        <end position="73"/>
    </location>
</feature>
<feature type="compositionally biased region" description="Low complexity" evidence="4">
    <location>
        <begin position="597"/>
        <end position="626"/>
    </location>
</feature>
<feature type="compositionally biased region" description="Low complexity" evidence="4">
    <location>
        <begin position="653"/>
        <end position="675"/>
    </location>
</feature>
<feature type="modified residue" description="Omega-N-methylarginine" evidence="9">
    <location>
        <position position="42"/>
    </location>
</feature>
<feature type="splice variant" id="VSP_022689" description="In isoform 2." evidence="7">
    <location>
        <begin position="1"/>
        <end position="11"/>
    </location>
</feature>
<feature type="mutagenesis site" description="Compromises SIM1:ARNT2 heterodimer stability. Compromises NPAS4:ARNT2 heterodimer stability." evidence="6">
    <original>L</original>
    <variation>E</variation>
    <location>
        <position position="86"/>
    </location>
</feature>
<feature type="mutagenesis site" description="Compromises SIM1:ARNT2 heterodimer stability. Compromises NPAS4:ARNT2 heterodimer stability." evidence="6">
    <original>L</original>
    <variation>E</variation>
    <location>
        <position position="106"/>
    </location>
</feature>
<feature type="mutagenesis site" description="Compromises SIM1:ARNT2 heterodimer stability. Does not compromise NPAS4:ARNT2 heterodimer stability." evidence="6">
    <original>L</original>
    <variation>E</variation>
    <location>
        <position position="141"/>
    </location>
</feature>
<feature type="mutagenesis site" description="Compromises SIM1:ARNT2 heterodimer stability. Does not compromise NPAS4:ARNT2 heterodimer stability." evidence="6">
    <original>A</original>
    <variation>D</variation>
    <location>
        <position position="145"/>
    </location>
</feature>
<feature type="mutagenesis site" description="Compromises SIM1:ARNT2 heterodimer stability. Does not compromise NPAS4:ARNT2 heterodimer stability." evidence="6">
    <original>I</original>
    <variation>D</variation>
    <location>
        <position position="238"/>
    </location>
</feature>
<feature type="mutagenesis site" description="Compromises SIM1:ARNT2 heterodimer stability. Does not compromise NPAS4:ARNT2 heterodimer stability." evidence="6">
    <original>V</original>
    <variation>D</variation>
    <location>
        <position position="279"/>
    </location>
</feature>
<feature type="mutagenesis site" description="Compromises SIM1:ARNT2 heterodimer stability. Does not compromise NPAS4:ARNT2 heterodimer stability." evidence="6">
    <original>R</original>
    <variation>A</variation>
    <location>
        <position position="340"/>
    </location>
</feature>
<feature type="mutagenesis site" description="Compromises SIM1:ARNT2 heterodimer stability. Does not compromise NPAS4:ARNT2 heterodimer stability." evidence="6">
    <original>N</original>
    <variation>A</variation>
    <location>
        <position position="422"/>
    </location>
</feature>
<feature type="sequence conflict" description="In Ref. 1; BAA09799." evidence="8" ref="1">
    <original>M</original>
    <variation>I</variation>
    <location>
        <position position="206"/>
    </location>
</feature>
<feature type="sequence conflict" description="In Ref. 3; AAH54546." evidence="8" ref="3">
    <original>I</original>
    <variation>T</variation>
    <location>
        <position position="432"/>
    </location>
</feature>
<reference key="1">
    <citation type="journal article" date="1996" name="Mol. Cell. Biol.">
        <title>cDNA cloning and tissue-specific expression of a novel basic helix-loop-helix/PAS factor (Arnt2) with close sequence similarity to the aryl hydrocarbon receptor nuclear translocator (Arnt).</title>
        <authorList>
            <person name="Hirose K."/>
            <person name="Morita M."/>
            <person name="Ema M."/>
            <person name="Mimura J."/>
            <person name="Hamada H."/>
            <person name="Fujii H."/>
            <person name="Saijo Y."/>
            <person name="Gotoh O."/>
            <person name="Sogawa K."/>
            <person name="Fujii-Kuriyama Y."/>
        </authorList>
    </citation>
    <scope>NUCLEOTIDE SEQUENCE [MRNA] (ISOFORM 1)</scope>
    <source>
        <strain>C57BL/6J</strain>
        <tissue>Embryo</tissue>
    </source>
</reference>
<reference key="2">
    <citation type="journal article" date="2002" name="DNA Res.">
        <title>Prediction of the coding sequences of mouse homologues of KIAA gene: I. The complete nucleotide sequences of 100 mouse KIAA-homologous cDNAs identified by screening of terminal sequences of cDNA clones randomly sampled from size-fractionated libraries.</title>
        <authorList>
            <person name="Okazaki N."/>
            <person name="Kikuno R."/>
            <person name="Ohara R."/>
            <person name="Inamoto S."/>
            <person name="Hara Y."/>
            <person name="Nagase T."/>
            <person name="Ohara O."/>
            <person name="Koga H."/>
        </authorList>
    </citation>
    <scope>NUCLEOTIDE SEQUENCE [LARGE SCALE MRNA] (ISOFORM 2)</scope>
    <source>
        <tissue>Brain</tissue>
    </source>
</reference>
<reference key="3">
    <citation type="journal article" date="2004" name="Genome Res.">
        <title>The status, quality, and expansion of the NIH full-length cDNA project: the Mammalian Gene Collection (MGC).</title>
        <authorList>
            <consortium name="The MGC Project Team"/>
        </authorList>
    </citation>
    <scope>NUCLEOTIDE SEQUENCE [LARGE SCALE MRNA] (ISOFORM 1)</scope>
    <source>
        <strain>C57BL/6J</strain>
        <tissue>Brain</tissue>
    </source>
</reference>
<reference key="4">
    <citation type="journal article" date="2000" name="Mech. Dev.">
        <title>Isolation and characterization of AINT: a novel ARNT interacting protein expressed during murine embryonic development.</title>
        <authorList>
            <person name="Sadek C.M."/>
            <person name="Jalaguier S."/>
            <person name="Feeney E.P."/>
            <person name="Aitola M."/>
            <person name="Damdimopoulos A.E."/>
            <person name="Pelto-Huikko M."/>
            <person name="Gustafsson J.-A."/>
        </authorList>
    </citation>
    <scope>INTERACTION WITH TACC3</scope>
</reference>
<reference key="5">
    <citation type="journal article" date="2014" name="Mol. Cell. Proteomics">
        <title>Immunoaffinity enrichment and mass spectrometry analysis of protein methylation.</title>
        <authorList>
            <person name="Guo A."/>
            <person name="Gu H."/>
            <person name="Zhou J."/>
            <person name="Mulhern D."/>
            <person name="Wang Y."/>
            <person name="Lee K.A."/>
            <person name="Yang V."/>
            <person name="Aguiar M."/>
            <person name="Kornhauser J."/>
            <person name="Jia X."/>
            <person name="Ren J."/>
            <person name="Beausoleil S.A."/>
            <person name="Silva J.C."/>
            <person name="Vemulapalli V."/>
            <person name="Bedford M.T."/>
            <person name="Comb M.J."/>
        </authorList>
    </citation>
    <scope>METHYLATION [LARGE SCALE ANALYSIS] AT ARG-42</scope>
    <scope>IDENTIFICATION BY MASS SPECTROMETRY [LARGE SCALE ANALYSIS]</scope>
    <source>
        <tissue>Brain</tissue>
    </source>
</reference>
<reference key="6">
    <citation type="journal article" date="2016" name="Elife">
        <title>NPAS1-ARNT and NPAS3-ARNT crystal structures implicate the bHLH-PAS family as multi-ligand binding transcription factors.</title>
        <authorList>
            <person name="Wu D."/>
            <person name="Su X."/>
            <person name="Potluri N."/>
            <person name="Kim Y."/>
            <person name="Rastinejad F."/>
        </authorList>
    </citation>
    <scope>INTERACTION WITH SIM1 AND NPAS4</scope>
    <scope>MUTAGENESIS OF LEU-86; LEU-106; LEU-141; ALA-145; ILE-238; VAL-279; ARG-340 AND ASN-422</scope>
</reference>
<keyword id="KW-0002">3D-structure</keyword>
<keyword id="KW-0025">Alternative splicing</keyword>
<keyword id="KW-0238">DNA-binding</keyword>
<keyword id="KW-0488">Methylation</keyword>
<keyword id="KW-0539">Nucleus</keyword>
<keyword id="KW-1185">Reference proteome</keyword>
<keyword id="KW-0677">Repeat</keyword>
<keyword id="KW-0804">Transcription</keyword>
<keyword id="KW-0805">Transcription regulation</keyword>
<accession>Q61324</accession>
<accession>Q7TQG2</accession>
<accession>Q8CHG9</accession>
<gene>
    <name type="primary">Arnt2</name>
    <name type="synonym">Kiaa0307</name>
</gene>
<name>ARNT2_MOUSE</name>